<protein>
    <recommendedName>
        <fullName evidence="1">Small ribosomal subunit protein uS4</fullName>
    </recommendedName>
    <alternativeName>
        <fullName evidence="2">30S ribosomal protein S4</fullName>
    </alternativeName>
</protein>
<gene>
    <name evidence="1" type="primary">rpsD</name>
    <name type="ordered locus">RF_0549</name>
</gene>
<accession>Q4UM23</accession>
<keyword id="KW-0687">Ribonucleoprotein</keyword>
<keyword id="KW-0689">Ribosomal protein</keyword>
<keyword id="KW-0694">RNA-binding</keyword>
<keyword id="KW-0699">rRNA-binding</keyword>
<dbReference type="EMBL" id="CP000053">
    <property type="protein sequence ID" value="AAY61400.1"/>
    <property type="status" value="ALT_INIT"/>
    <property type="molecule type" value="Genomic_DNA"/>
</dbReference>
<dbReference type="SMR" id="Q4UM23"/>
<dbReference type="STRING" id="315456.RF_0549"/>
<dbReference type="KEGG" id="rfe:RF_0549"/>
<dbReference type="eggNOG" id="COG0522">
    <property type="taxonomic scope" value="Bacteria"/>
</dbReference>
<dbReference type="HOGENOM" id="CLU_092403_0_0_5"/>
<dbReference type="OrthoDB" id="9803672at2"/>
<dbReference type="Proteomes" id="UP000008548">
    <property type="component" value="Chromosome"/>
</dbReference>
<dbReference type="GO" id="GO:0015935">
    <property type="term" value="C:small ribosomal subunit"/>
    <property type="evidence" value="ECO:0007669"/>
    <property type="project" value="InterPro"/>
</dbReference>
<dbReference type="GO" id="GO:0019843">
    <property type="term" value="F:rRNA binding"/>
    <property type="evidence" value="ECO:0007669"/>
    <property type="project" value="UniProtKB-UniRule"/>
</dbReference>
<dbReference type="GO" id="GO:0003735">
    <property type="term" value="F:structural constituent of ribosome"/>
    <property type="evidence" value="ECO:0007669"/>
    <property type="project" value="InterPro"/>
</dbReference>
<dbReference type="GO" id="GO:0042274">
    <property type="term" value="P:ribosomal small subunit biogenesis"/>
    <property type="evidence" value="ECO:0007669"/>
    <property type="project" value="TreeGrafter"/>
</dbReference>
<dbReference type="GO" id="GO:0006412">
    <property type="term" value="P:translation"/>
    <property type="evidence" value="ECO:0007669"/>
    <property type="project" value="UniProtKB-UniRule"/>
</dbReference>
<dbReference type="CDD" id="cd00165">
    <property type="entry name" value="S4"/>
    <property type="match status" value="1"/>
</dbReference>
<dbReference type="FunFam" id="3.10.290.10:FF:000001">
    <property type="entry name" value="30S ribosomal protein S4"/>
    <property type="match status" value="1"/>
</dbReference>
<dbReference type="Gene3D" id="1.10.1050.10">
    <property type="entry name" value="Ribosomal Protein S4 Delta 41, Chain A, domain 1"/>
    <property type="match status" value="1"/>
</dbReference>
<dbReference type="Gene3D" id="3.10.290.10">
    <property type="entry name" value="RNA-binding S4 domain"/>
    <property type="match status" value="1"/>
</dbReference>
<dbReference type="HAMAP" id="MF_01306_B">
    <property type="entry name" value="Ribosomal_uS4_B"/>
    <property type="match status" value="1"/>
</dbReference>
<dbReference type="InterPro" id="IPR022801">
    <property type="entry name" value="Ribosomal_uS4"/>
</dbReference>
<dbReference type="InterPro" id="IPR005709">
    <property type="entry name" value="Ribosomal_uS4_bac-type"/>
</dbReference>
<dbReference type="InterPro" id="IPR018079">
    <property type="entry name" value="Ribosomal_uS4_CS"/>
</dbReference>
<dbReference type="InterPro" id="IPR001912">
    <property type="entry name" value="Ribosomal_uS4_N"/>
</dbReference>
<dbReference type="InterPro" id="IPR002942">
    <property type="entry name" value="S4_RNA-bd"/>
</dbReference>
<dbReference type="InterPro" id="IPR036986">
    <property type="entry name" value="S4_RNA-bd_sf"/>
</dbReference>
<dbReference type="NCBIfam" id="NF003717">
    <property type="entry name" value="PRK05327.1"/>
    <property type="match status" value="1"/>
</dbReference>
<dbReference type="NCBIfam" id="TIGR01017">
    <property type="entry name" value="rpsD_bact"/>
    <property type="match status" value="1"/>
</dbReference>
<dbReference type="PANTHER" id="PTHR11831">
    <property type="entry name" value="30S 40S RIBOSOMAL PROTEIN"/>
    <property type="match status" value="1"/>
</dbReference>
<dbReference type="PANTHER" id="PTHR11831:SF4">
    <property type="entry name" value="SMALL RIBOSOMAL SUBUNIT PROTEIN US4M"/>
    <property type="match status" value="1"/>
</dbReference>
<dbReference type="Pfam" id="PF00163">
    <property type="entry name" value="Ribosomal_S4"/>
    <property type="match status" value="1"/>
</dbReference>
<dbReference type="Pfam" id="PF01479">
    <property type="entry name" value="S4"/>
    <property type="match status" value="1"/>
</dbReference>
<dbReference type="SMART" id="SM01390">
    <property type="entry name" value="Ribosomal_S4"/>
    <property type="match status" value="1"/>
</dbReference>
<dbReference type="SMART" id="SM00363">
    <property type="entry name" value="S4"/>
    <property type="match status" value="1"/>
</dbReference>
<dbReference type="SUPFAM" id="SSF55174">
    <property type="entry name" value="Alpha-L RNA-binding motif"/>
    <property type="match status" value="1"/>
</dbReference>
<dbReference type="PROSITE" id="PS00632">
    <property type="entry name" value="RIBOSOMAL_S4"/>
    <property type="match status" value="1"/>
</dbReference>
<dbReference type="PROSITE" id="PS50889">
    <property type="entry name" value="S4"/>
    <property type="match status" value="1"/>
</dbReference>
<proteinExistence type="inferred from homology"/>
<evidence type="ECO:0000255" key="1">
    <source>
        <dbReference type="HAMAP-Rule" id="MF_01306"/>
    </source>
</evidence>
<evidence type="ECO:0000305" key="2"/>
<reference key="1">
    <citation type="journal article" date="2005" name="PLoS Biol.">
        <title>The genome sequence of Rickettsia felis identifies the first putative conjugative plasmid in an obligate intracellular parasite.</title>
        <authorList>
            <person name="Ogata H."/>
            <person name="Renesto P."/>
            <person name="Audic S."/>
            <person name="Robert C."/>
            <person name="Blanc G."/>
            <person name="Fournier P.-E."/>
            <person name="Parinello H."/>
            <person name="Claverie J.-M."/>
            <person name="Raoult D."/>
        </authorList>
    </citation>
    <scope>NUCLEOTIDE SEQUENCE [LARGE SCALE GENOMIC DNA]</scope>
    <source>
        <strain>ATCC VR-1525 / URRWXCal2</strain>
    </source>
</reference>
<organism>
    <name type="scientific">Rickettsia felis (strain ATCC VR-1525 / URRWXCal2)</name>
    <name type="common">Rickettsia azadi</name>
    <dbReference type="NCBI Taxonomy" id="315456"/>
    <lineage>
        <taxon>Bacteria</taxon>
        <taxon>Pseudomonadati</taxon>
        <taxon>Pseudomonadota</taxon>
        <taxon>Alphaproteobacteria</taxon>
        <taxon>Rickettsiales</taxon>
        <taxon>Rickettsiaceae</taxon>
        <taxon>Rickettsieae</taxon>
        <taxon>Rickettsia</taxon>
        <taxon>spotted fever group</taxon>
    </lineage>
</organism>
<name>RS4_RICFE</name>
<sequence length="205" mass="23208">MTKIVRSKYKASRRLGVSLWGDSKDAFNTRNYRPGQHGQNTMIKTSDYGLHLKAKQRLKCHYGRVTEKQFRNIFALAQKMKGNTGENFIGLLESRLDTVVYRMNIAPTIFAARQLVSHGHIKLNGKKADIASIRLKEGDVIEVKESVKQIPLIQESVSKQAQTTPGYLSFDVPSLTGKYLRVPALSDVPYPFEAEVHLVIELYSR</sequence>
<comment type="function">
    <text evidence="1">One of the primary rRNA binding proteins, it binds directly to 16S rRNA where it nucleates assembly of the body of the 30S subunit.</text>
</comment>
<comment type="function">
    <text evidence="1">With S5 and S12 plays an important role in translational accuracy.</text>
</comment>
<comment type="subunit">
    <text evidence="1">Part of the 30S ribosomal subunit. Contacts protein S5. The interaction surface between S4 and S5 is involved in control of translational fidelity.</text>
</comment>
<comment type="similarity">
    <text evidence="1">Belongs to the universal ribosomal protein uS4 family.</text>
</comment>
<comment type="sequence caution" evidence="2">
    <conflict type="erroneous initiation">
        <sequence resource="EMBL-CDS" id="AAY61400"/>
    </conflict>
</comment>
<feature type="chain" id="PRO_0000228922" description="Small ribosomal subunit protein uS4">
    <location>
        <begin position="1"/>
        <end position="205"/>
    </location>
</feature>
<feature type="domain" description="S4 RNA-binding" evidence="1">
    <location>
        <begin position="94"/>
        <end position="157"/>
    </location>
</feature>